<protein>
    <recommendedName>
        <fullName evidence="1">D-alanyl carrier protein</fullName>
        <shortName evidence="1">DCP</shortName>
    </recommendedName>
    <alternativeName>
        <fullName evidence="1">D-alanine--poly(phosphoribitol) ligase subunit 2</fullName>
    </alternativeName>
</protein>
<evidence type="ECO:0000255" key="1">
    <source>
        <dbReference type="HAMAP-Rule" id="MF_00565"/>
    </source>
</evidence>
<sequence length="79" mass="9010">MSIEETVIELFDRLFMEDVSEMMDEDLFDAGVLDSLGTVELIVELESTFNIKVPISEFGRDDWNTVTKIVQGVEELQHA</sequence>
<proteinExistence type="inferred from homology"/>
<dbReference type="EMBL" id="CP000259">
    <property type="protein sequence ID" value="ABF32300.1"/>
    <property type="molecule type" value="Genomic_DNA"/>
</dbReference>
<dbReference type="RefSeq" id="WP_002984216.1">
    <property type="nucleotide sequence ID" value="NC_008021.1"/>
</dbReference>
<dbReference type="SMR" id="Q1JLB9"/>
<dbReference type="GeneID" id="83690920"/>
<dbReference type="KEGG" id="spk:MGAS9429_Spy1113"/>
<dbReference type="HOGENOM" id="CLU_108696_19_0_9"/>
<dbReference type="UniPathway" id="UPA00556"/>
<dbReference type="Proteomes" id="UP000002433">
    <property type="component" value="Chromosome"/>
</dbReference>
<dbReference type="GO" id="GO:0005737">
    <property type="term" value="C:cytoplasm"/>
    <property type="evidence" value="ECO:0007669"/>
    <property type="project" value="UniProtKB-SubCell"/>
</dbReference>
<dbReference type="GO" id="GO:0036370">
    <property type="term" value="F:D-alanyl carrier activity"/>
    <property type="evidence" value="ECO:0007669"/>
    <property type="project" value="UniProtKB-UniRule"/>
</dbReference>
<dbReference type="GO" id="GO:0071555">
    <property type="term" value="P:cell wall organization"/>
    <property type="evidence" value="ECO:0007669"/>
    <property type="project" value="UniProtKB-KW"/>
</dbReference>
<dbReference type="GO" id="GO:0070395">
    <property type="term" value="P:lipoteichoic acid biosynthetic process"/>
    <property type="evidence" value="ECO:0007669"/>
    <property type="project" value="UniProtKB-UniRule"/>
</dbReference>
<dbReference type="Gene3D" id="1.10.1200.10">
    <property type="entry name" value="ACP-like"/>
    <property type="match status" value="1"/>
</dbReference>
<dbReference type="HAMAP" id="MF_00565">
    <property type="entry name" value="DltC"/>
    <property type="match status" value="1"/>
</dbReference>
<dbReference type="InterPro" id="IPR036736">
    <property type="entry name" value="ACP-like_sf"/>
</dbReference>
<dbReference type="InterPro" id="IPR003230">
    <property type="entry name" value="DltC"/>
</dbReference>
<dbReference type="InterPro" id="IPR009081">
    <property type="entry name" value="PP-bd_ACP"/>
</dbReference>
<dbReference type="NCBIfam" id="TIGR01688">
    <property type="entry name" value="dltC"/>
    <property type="match status" value="1"/>
</dbReference>
<dbReference type="NCBIfam" id="NF003464">
    <property type="entry name" value="PRK05087.1"/>
    <property type="match status" value="1"/>
</dbReference>
<dbReference type="Pfam" id="PF00550">
    <property type="entry name" value="PP-binding"/>
    <property type="match status" value="1"/>
</dbReference>
<dbReference type="SUPFAM" id="SSF47336">
    <property type="entry name" value="ACP-like"/>
    <property type="match status" value="1"/>
</dbReference>
<dbReference type="PROSITE" id="PS50075">
    <property type="entry name" value="CARRIER"/>
    <property type="match status" value="1"/>
</dbReference>
<keyword id="KW-0961">Cell wall biogenesis/degradation</keyword>
<keyword id="KW-0963">Cytoplasm</keyword>
<keyword id="KW-0596">Phosphopantetheine</keyword>
<keyword id="KW-0597">Phosphoprotein</keyword>
<gene>
    <name evidence="1" type="primary">dltC</name>
    <name type="ordered locus">MGAS9429_Spy1113</name>
</gene>
<name>DLTC_STRPC</name>
<organism>
    <name type="scientific">Streptococcus pyogenes serotype M12 (strain MGAS9429)</name>
    <dbReference type="NCBI Taxonomy" id="370551"/>
    <lineage>
        <taxon>Bacteria</taxon>
        <taxon>Bacillati</taxon>
        <taxon>Bacillota</taxon>
        <taxon>Bacilli</taxon>
        <taxon>Lactobacillales</taxon>
        <taxon>Streptococcaceae</taxon>
        <taxon>Streptococcus</taxon>
    </lineage>
</organism>
<accession>Q1JLB9</accession>
<comment type="function">
    <text evidence="1">Carrier protein involved in the D-alanylation of lipoteichoic acid (LTA). The loading of thioester-linked D-alanine onto DltC is catalyzed by D-alanine--D-alanyl carrier protein ligase DltA. The DltC-carried D-alanyl group is further transferred to cell membrane phosphatidylglycerol (PG) by forming an ester bond, probably catalyzed by DltD. D-alanylation of LTA plays an important role in modulating the properties of the cell wall in Gram-positive bacteria, influencing the net charge of the cell wall.</text>
</comment>
<comment type="pathway">
    <text evidence="1">Cell wall biogenesis; lipoteichoic acid biosynthesis.</text>
</comment>
<comment type="subcellular location">
    <subcellularLocation>
        <location evidence="1">Cytoplasm</location>
    </subcellularLocation>
</comment>
<comment type="PTM">
    <text evidence="1">4'-phosphopantetheine is transferred from CoA to a specific serine of apo-DCP.</text>
</comment>
<comment type="similarity">
    <text evidence="1">Belongs to the DltC family.</text>
</comment>
<reference key="1">
    <citation type="journal article" date="2006" name="Proc. Natl. Acad. Sci. U.S.A.">
        <title>Molecular genetic anatomy of inter- and intraserotype variation in the human bacterial pathogen group A Streptococcus.</title>
        <authorList>
            <person name="Beres S.B."/>
            <person name="Richter E.W."/>
            <person name="Nagiec M.J."/>
            <person name="Sumby P."/>
            <person name="Porcella S.F."/>
            <person name="DeLeo F.R."/>
            <person name="Musser J.M."/>
        </authorList>
    </citation>
    <scope>NUCLEOTIDE SEQUENCE [LARGE SCALE GENOMIC DNA]</scope>
    <source>
        <strain>MGAS9429</strain>
    </source>
</reference>
<feature type="chain" id="PRO_1000024929" description="D-alanyl carrier protein">
    <location>
        <begin position="1"/>
        <end position="79"/>
    </location>
</feature>
<feature type="domain" description="Carrier" evidence="1">
    <location>
        <begin position="1"/>
        <end position="77"/>
    </location>
</feature>
<feature type="modified residue" description="O-(pantetheine 4'-phosphoryl)serine" evidence="1">
    <location>
        <position position="35"/>
    </location>
</feature>